<organism>
    <name type="scientific">Mus musculus</name>
    <name type="common">Mouse</name>
    <dbReference type="NCBI Taxonomy" id="10090"/>
    <lineage>
        <taxon>Eukaryota</taxon>
        <taxon>Metazoa</taxon>
        <taxon>Chordata</taxon>
        <taxon>Craniata</taxon>
        <taxon>Vertebrata</taxon>
        <taxon>Euteleostomi</taxon>
        <taxon>Mammalia</taxon>
        <taxon>Eutheria</taxon>
        <taxon>Euarchontoglires</taxon>
        <taxon>Glires</taxon>
        <taxon>Rodentia</taxon>
        <taxon>Myomorpha</taxon>
        <taxon>Muroidea</taxon>
        <taxon>Muridae</taxon>
        <taxon>Murinae</taxon>
        <taxon>Mus</taxon>
        <taxon>Mus</taxon>
    </lineage>
</organism>
<gene>
    <name type="primary">Rnf212</name>
</gene>
<proteinExistence type="evidence at protein level"/>
<keyword id="KW-0025">Alternative splicing</keyword>
<keyword id="KW-0158">Chromosome</keyword>
<keyword id="KW-0175">Coiled coil</keyword>
<keyword id="KW-0469">Meiosis</keyword>
<keyword id="KW-0479">Metal-binding</keyword>
<keyword id="KW-0539">Nucleus</keyword>
<keyword id="KW-1185">Reference proteome</keyword>
<keyword id="KW-0808">Transferase</keyword>
<keyword id="KW-0833">Ubl conjugation pathway</keyword>
<keyword id="KW-0862">Zinc</keyword>
<keyword id="KW-0863">Zinc-finger</keyword>
<feature type="chain" id="PRO_0000421995" description="Probable E3 SUMO-protein ligase RNF212">
    <location>
        <begin position="1"/>
        <end position="307"/>
    </location>
</feature>
<feature type="zinc finger region" description="RING-type" evidence="2">
    <location>
        <begin position="7"/>
        <end position="46"/>
    </location>
</feature>
<feature type="region of interest" description="Disordered" evidence="3">
    <location>
        <begin position="164"/>
        <end position="291"/>
    </location>
</feature>
<feature type="coiled-coil region" evidence="1">
    <location>
        <begin position="91"/>
        <end position="124"/>
    </location>
</feature>
<feature type="compositionally biased region" description="Polar residues" evidence="3">
    <location>
        <begin position="202"/>
        <end position="213"/>
    </location>
</feature>
<feature type="compositionally biased region" description="Polar residues" evidence="3">
    <location>
        <begin position="233"/>
        <end position="252"/>
    </location>
</feature>
<feature type="compositionally biased region" description="Polar residues" evidence="3">
    <location>
        <begin position="259"/>
        <end position="271"/>
    </location>
</feature>
<feature type="splice variant" id="VSP_046302" description="In isoform 2." evidence="6">
    <location>
        <begin position="1"/>
        <end position="121"/>
    </location>
</feature>
<feature type="splice variant" id="VSP_046303" description="In isoform 2." evidence="6">
    <original>VPPLQMPYKELSPPPASQLSSRATQGPSPSVSSSWTGPPRQPISISGLLQRQCAGSASPRGMDTEKMSPFLPSTPTNLRSVASPWHACVHR</original>
    <variation>ISIP</variation>
    <location>
        <begin position="217"/>
        <end position="307"/>
    </location>
</feature>
<dbReference type="EC" id="2.3.2.-"/>
<dbReference type="EMBL" id="AK089585">
    <property type="protein sequence ID" value="BAC40927.1"/>
    <property type="molecule type" value="mRNA"/>
</dbReference>
<dbReference type="EMBL" id="AC123743">
    <property type="status" value="NOT_ANNOTATED_CDS"/>
    <property type="molecule type" value="Genomic_DNA"/>
</dbReference>
<dbReference type="CCDS" id="CCDS89962.1">
    <molecule id="F6TQD1-1"/>
</dbReference>
<dbReference type="RefSeq" id="NP_001349816.1">
    <molecule id="F6TQD1-1"/>
    <property type="nucleotide sequence ID" value="NM_001362887.1"/>
</dbReference>
<dbReference type="SMR" id="F6TQD1"/>
<dbReference type="FunCoup" id="F6TQD1">
    <property type="interactions" value="26"/>
</dbReference>
<dbReference type="STRING" id="10090.ENSMUSP00000148758"/>
<dbReference type="iPTMnet" id="F6TQD1"/>
<dbReference type="PhosphoSitePlus" id="F6TQD1"/>
<dbReference type="PaxDb" id="10090-ENSMUSP00000063525"/>
<dbReference type="ProteomicsDB" id="300539">
    <molecule id="F6TQD1-1"/>
</dbReference>
<dbReference type="Antibodypedia" id="22203">
    <property type="antibodies" value="121 antibodies from 25 providers"/>
</dbReference>
<dbReference type="Ensembl" id="ENSMUST00000196652.5">
    <molecule id="F6TQD1-2"/>
    <property type="protein sequence ID" value="ENSMUSP00000143556.2"/>
    <property type="gene ID" value="ENSMUSG00000055385.13"/>
</dbReference>
<dbReference type="Ensembl" id="ENSMUST00000212212.2">
    <molecule id="F6TQD1-1"/>
    <property type="protein sequence ID" value="ENSMUSP00000148758.2"/>
    <property type="gene ID" value="ENSMUSG00000055385.13"/>
</dbReference>
<dbReference type="GeneID" id="671564"/>
<dbReference type="UCSC" id="uc008ypb.1">
    <molecule id="F6TQD1-1"/>
    <property type="organism name" value="mouse"/>
</dbReference>
<dbReference type="UCSC" id="uc008ypc.1">
    <molecule id="F6TQD1-2"/>
    <property type="organism name" value="mouse"/>
</dbReference>
<dbReference type="AGR" id="MGI:3645767"/>
<dbReference type="MGI" id="MGI:3645767">
    <property type="gene designation" value="Rnf212"/>
</dbReference>
<dbReference type="VEuPathDB" id="HostDB:ENSMUSG00000055385"/>
<dbReference type="eggNOG" id="KOG4739">
    <property type="taxonomic scope" value="Eukaryota"/>
</dbReference>
<dbReference type="GeneTree" id="ENSGT00740000115581"/>
<dbReference type="InParanoid" id="F6TQD1"/>
<dbReference type="OMA" id="VCCNSCF"/>
<dbReference type="OrthoDB" id="2535391at2759"/>
<dbReference type="UniPathway" id="UPA00886"/>
<dbReference type="PRO" id="PR:F6TQD1"/>
<dbReference type="Proteomes" id="UP000000589">
    <property type="component" value="Chromosome 5"/>
</dbReference>
<dbReference type="RNAct" id="F6TQD1">
    <property type="molecule type" value="protein"/>
</dbReference>
<dbReference type="Bgee" id="ENSMUSG00000055385">
    <property type="expression patterns" value="Expressed in bone marrow and 28 other cell types or tissues"/>
</dbReference>
<dbReference type="ExpressionAtlas" id="F6TQD1">
    <property type="expression patterns" value="baseline and differential"/>
</dbReference>
<dbReference type="GO" id="GO:0000795">
    <property type="term" value="C:synaptonemal complex"/>
    <property type="evidence" value="ECO:0007669"/>
    <property type="project" value="InterPro"/>
</dbReference>
<dbReference type="GO" id="GO:0019789">
    <property type="term" value="F:SUMO transferase activity"/>
    <property type="evidence" value="ECO:0000304"/>
    <property type="project" value="UniProtKB"/>
</dbReference>
<dbReference type="GO" id="GO:0008270">
    <property type="term" value="F:zinc ion binding"/>
    <property type="evidence" value="ECO:0007669"/>
    <property type="project" value="UniProtKB-KW"/>
</dbReference>
<dbReference type="GO" id="GO:0051026">
    <property type="term" value="P:chiasma assembly"/>
    <property type="evidence" value="ECO:0000315"/>
    <property type="project" value="UniProtKB"/>
</dbReference>
<dbReference type="GO" id="GO:0006311">
    <property type="term" value="P:meiotic gene conversion"/>
    <property type="evidence" value="ECO:0000315"/>
    <property type="project" value="UniProtKB"/>
</dbReference>
<dbReference type="GO" id="GO:0016925">
    <property type="term" value="P:protein sumoylation"/>
    <property type="evidence" value="ECO:0000304"/>
    <property type="project" value="UniProtKB"/>
</dbReference>
<dbReference type="GO" id="GO:0007131">
    <property type="term" value="P:reciprocal meiotic recombination"/>
    <property type="evidence" value="ECO:0000315"/>
    <property type="project" value="UniProtKB"/>
</dbReference>
<dbReference type="CDD" id="cd16746">
    <property type="entry name" value="RING-HC_RNF212"/>
    <property type="match status" value="1"/>
</dbReference>
<dbReference type="FunFam" id="3.30.40.10:FF:000839">
    <property type="entry name" value="Ring finger protein 212"/>
    <property type="match status" value="1"/>
</dbReference>
<dbReference type="Gene3D" id="3.30.40.10">
    <property type="entry name" value="Zinc/RING finger domain, C3HC4 (zinc finger)"/>
    <property type="match status" value="1"/>
</dbReference>
<dbReference type="InterPro" id="IPR042123">
    <property type="entry name" value="Zip3/RNF212-like"/>
</dbReference>
<dbReference type="InterPro" id="IPR001841">
    <property type="entry name" value="Znf_RING"/>
</dbReference>
<dbReference type="InterPro" id="IPR013083">
    <property type="entry name" value="Znf_RING/FYVE/PHD"/>
</dbReference>
<dbReference type="InterPro" id="IPR017907">
    <property type="entry name" value="Znf_RING_CS"/>
</dbReference>
<dbReference type="PANTHER" id="PTHR22663:SF21">
    <property type="entry name" value="E3 SUMO-PROTEIN LIGASE RNF212-RELATED"/>
    <property type="match status" value="1"/>
</dbReference>
<dbReference type="PANTHER" id="PTHR22663">
    <property type="entry name" value="RING FINGER PROTEIN NARYA-RELATED"/>
    <property type="match status" value="1"/>
</dbReference>
<dbReference type="Pfam" id="PF14634">
    <property type="entry name" value="zf-RING_5"/>
    <property type="match status" value="1"/>
</dbReference>
<dbReference type="SUPFAM" id="SSF57850">
    <property type="entry name" value="RING/U-box"/>
    <property type="match status" value="1"/>
</dbReference>
<dbReference type="PROSITE" id="PS00518">
    <property type="entry name" value="ZF_RING_1"/>
    <property type="match status" value="1"/>
</dbReference>
<dbReference type="PROSITE" id="PS50089">
    <property type="entry name" value="ZF_RING_2"/>
    <property type="match status" value="1"/>
</dbReference>
<comment type="function">
    <text evidence="4 5">SUMO E3 ligase that acts as a regulator of crossing-over during meiosis: required to couple chromosome synapsis to the formation of crossover-specific recombination complexes. Localizes to recombination sites and stabilizes meiosis-specific recombination factors, such as MutS-gamma complex proteins (MSH4 and MSH5) and TEX11. May mediate sumoylation of target proteins MSH4 and/or MSH5, leading to enhance their binding to recombination sites. Acts as a limiting factor for crossover designation and/or reinforcement and plays an antagonist role with CCNB1IP1/HEI10 in the regulation of meiotic recombination.</text>
</comment>
<comment type="pathway">
    <text>Protein modification; protein sumoylation.</text>
</comment>
<comment type="subcellular location">
    <subcellularLocation>
        <location>Nucleus</location>
    </subcellularLocation>
    <subcellularLocation>
        <location>Chromosome</location>
    </subcellularLocation>
    <text>Associates to the synaptonemal complex. Localizes to a minority of double-strand breaks (DSBs) sites. Marks crossover sites during midpachynema.</text>
</comment>
<comment type="alternative products">
    <event type="alternative splicing"/>
    <isoform>
        <id>F6TQD1-1</id>
        <name>1</name>
        <sequence type="displayed"/>
    </isoform>
    <isoform>
        <id>F6TQD1-2</id>
        <name>2</name>
        <sequence type="described" ref="VSP_046302 VSP_046303"/>
    </isoform>
</comment>
<comment type="tissue specificity">
    <text evidence="4">Specifically expressed in meiocytes of the gonads.</text>
</comment>
<comment type="developmental stage">
    <text evidence="4 5">In spermatocytes, first detected at the transition from leptonema to zygonema, localizing specifically to initial sites of homolog synapsis. The number of synaptonemal complex-associated Rnf212 increases as synapsis proceeds. Excluded from unsynapsed homolog. In early pachynema, as cells complete synapsis, detected as a punctate pattern of irregular foci along the synaptonemal complexes. Also localizes to the synapsed pseudoautosomal regions of the X-Y chromosomes. After early pachynema, protein levels strongly drop. By midpachynema, Rnf212 foci only remain at sites where crossovers form. Remaining foci disappear in late pachynema before the disassembly of synaptonemal complexes at diplonema and are not detected in early diplotene-stage cells in which homologs begin to desynapse. Pattern in fetal oocytes is very similar, except that the late-stage Rnf212 foci are still detected in nuclei in both the late-pachytene and early diplotene stages (at protein level).</text>
</comment>
<comment type="disruption phenotype">
    <text evidence="4">Both male and female mice are sterile. Males do not make sperm and have much smaller testes, a characteristic of mutants with meiotic defects. Testes show an absence of post-anaphase I cells, indicating loss of spermatocytes at this stage (stage XII seminiferous tubules). In females, ovary size is similar to that of wild-type animals, and high numbers of oocytes are present in mature animals. Complete synapsis is achieved but crossover complexes are absent. Rnf212 is haploinsufficient: although herozygous males are fertile and have wild-type sperm counts, they show significantly fewer Mlh1 foci and fewer chiasmata. Haploinsufficiency suggests that Rnf212 is a limiting factor for crossover designation and/or reinforcement.</text>
</comment>
<protein>
    <recommendedName>
        <fullName>Probable E3 SUMO-protein ligase RNF212</fullName>
        <ecNumber>2.3.2.-</ecNumber>
    </recommendedName>
    <alternativeName>
        <fullName evidence="7">Probable E3 SUMO-protein transferase RNF212</fullName>
    </alternativeName>
    <alternativeName>
        <fullName>RING finger protein 212</fullName>
    </alternativeName>
</protein>
<sequence length="307" mass="33898">MASWVFCNRCFQSPHRKSSFSLTSCGHVYCHSCLLKGTKNECVICQAPCQTVLLSKHTNSNIQTFFLGIDGLCKKYSQETSQISEFQEKHRRRLVAFYQEKISQLEESLRKSVLQIKQLQSMRSSQQPAFNKIKNSVSTKPNGYLFLPPNSSLPDRIESMDIDLTPPARKPEMSAGPSRISVISPPQDGRMGSVTCRGPQHLSLTPSHASMTKASRVPPLQMPYKELSPPPASQLSSRATQGPSPSVSSSWTGPPRQPISISGLLQRQCAGSASPRGMDTEKMSPFLPSTPTNLRSVASPWHACVHR</sequence>
<name>RN212_MOUSE</name>
<evidence type="ECO:0000255" key="1"/>
<evidence type="ECO:0000255" key="2">
    <source>
        <dbReference type="PROSITE-ProRule" id="PRU00175"/>
    </source>
</evidence>
<evidence type="ECO:0000256" key="3">
    <source>
        <dbReference type="SAM" id="MobiDB-lite"/>
    </source>
</evidence>
<evidence type="ECO:0000269" key="4">
    <source>
    </source>
</evidence>
<evidence type="ECO:0000269" key="5">
    <source>
    </source>
</evidence>
<evidence type="ECO:0000303" key="6">
    <source>
    </source>
</evidence>
<evidence type="ECO:0000305" key="7"/>
<accession>F6TQD1</accession>
<accession>Q8BN46</accession>
<reference key="1">
    <citation type="journal article" date="2013" name="Nat. Genet.">
        <title>RNF212 is a dosage-sensitive regulator of crossing-over during mammalian meiosis.</title>
        <authorList>
            <person name="Reynolds A."/>
            <person name="Qiao H."/>
            <person name="Yang Y."/>
            <person name="Chen J.K."/>
            <person name="Jackson N."/>
            <person name="Biswas K."/>
            <person name="Holloway J.K."/>
            <person name="Baudat F."/>
            <person name="de Massy B."/>
            <person name="Wang J."/>
            <person name="Hoog C."/>
            <person name="Cohen P.E."/>
            <person name="Hunter N."/>
        </authorList>
    </citation>
    <scope>NUCLEOTIDE SEQUENCE [MRNA] (ISOFORM 1)</scope>
    <scope>FUNCTION</scope>
    <scope>SUBCELLULAR LOCATION</scope>
    <scope>TISSUE SPECIFICITY</scope>
    <scope>DEVELOPMENTAL STAGE</scope>
    <scope>DISRUPTION PHENOTYPE</scope>
</reference>
<reference key="2">
    <citation type="journal article" date="2005" name="Science">
        <title>The transcriptional landscape of the mammalian genome.</title>
        <authorList>
            <person name="Carninci P."/>
            <person name="Kasukawa T."/>
            <person name="Katayama S."/>
            <person name="Gough J."/>
            <person name="Frith M.C."/>
            <person name="Maeda N."/>
            <person name="Oyama R."/>
            <person name="Ravasi T."/>
            <person name="Lenhard B."/>
            <person name="Wells C."/>
            <person name="Kodzius R."/>
            <person name="Shimokawa K."/>
            <person name="Bajic V.B."/>
            <person name="Brenner S.E."/>
            <person name="Batalov S."/>
            <person name="Forrest A.R."/>
            <person name="Zavolan M."/>
            <person name="Davis M.J."/>
            <person name="Wilming L.G."/>
            <person name="Aidinis V."/>
            <person name="Allen J.E."/>
            <person name="Ambesi-Impiombato A."/>
            <person name="Apweiler R."/>
            <person name="Aturaliya R.N."/>
            <person name="Bailey T.L."/>
            <person name="Bansal M."/>
            <person name="Baxter L."/>
            <person name="Beisel K.W."/>
            <person name="Bersano T."/>
            <person name="Bono H."/>
            <person name="Chalk A.M."/>
            <person name="Chiu K.P."/>
            <person name="Choudhary V."/>
            <person name="Christoffels A."/>
            <person name="Clutterbuck D.R."/>
            <person name="Crowe M.L."/>
            <person name="Dalla E."/>
            <person name="Dalrymple B.P."/>
            <person name="de Bono B."/>
            <person name="Della Gatta G."/>
            <person name="di Bernardo D."/>
            <person name="Down T."/>
            <person name="Engstrom P."/>
            <person name="Fagiolini M."/>
            <person name="Faulkner G."/>
            <person name="Fletcher C.F."/>
            <person name="Fukushima T."/>
            <person name="Furuno M."/>
            <person name="Futaki S."/>
            <person name="Gariboldi M."/>
            <person name="Georgii-Hemming P."/>
            <person name="Gingeras T.R."/>
            <person name="Gojobori T."/>
            <person name="Green R.E."/>
            <person name="Gustincich S."/>
            <person name="Harbers M."/>
            <person name="Hayashi Y."/>
            <person name="Hensch T.K."/>
            <person name="Hirokawa N."/>
            <person name="Hill D."/>
            <person name="Huminiecki L."/>
            <person name="Iacono M."/>
            <person name="Ikeo K."/>
            <person name="Iwama A."/>
            <person name="Ishikawa T."/>
            <person name="Jakt M."/>
            <person name="Kanapin A."/>
            <person name="Katoh M."/>
            <person name="Kawasawa Y."/>
            <person name="Kelso J."/>
            <person name="Kitamura H."/>
            <person name="Kitano H."/>
            <person name="Kollias G."/>
            <person name="Krishnan S.P."/>
            <person name="Kruger A."/>
            <person name="Kummerfeld S.K."/>
            <person name="Kurochkin I.V."/>
            <person name="Lareau L.F."/>
            <person name="Lazarevic D."/>
            <person name="Lipovich L."/>
            <person name="Liu J."/>
            <person name="Liuni S."/>
            <person name="McWilliam S."/>
            <person name="Madan Babu M."/>
            <person name="Madera M."/>
            <person name="Marchionni L."/>
            <person name="Matsuda H."/>
            <person name="Matsuzawa S."/>
            <person name="Miki H."/>
            <person name="Mignone F."/>
            <person name="Miyake S."/>
            <person name="Morris K."/>
            <person name="Mottagui-Tabar S."/>
            <person name="Mulder N."/>
            <person name="Nakano N."/>
            <person name="Nakauchi H."/>
            <person name="Ng P."/>
            <person name="Nilsson R."/>
            <person name="Nishiguchi S."/>
            <person name="Nishikawa S."/>
            <person name="Nori F."/>
            <person name="Ohara O."/>
            <person name="Okazaki Y."/>
            <person name="Orlando V."/>
            <person name="Pang K.C."/>
            <person name="Pavan W.J."/>
            <person name="Pavesi G."/>
            <person name="Pesole G."/>
            <person name="Petrovsky N."/>
            <person name="Piazza S."/>
            <person name="Reed J."/>
            <person name="Reid J.F."/>
            <person name="Ring B.Z."/>
            <person name="Ringwald M."/>
            <person name="Rost B."/>
            <person name="Ruan Y."/>
            <person name="Salzberg S.L."/>
            <person name="Sandelin A."/>
            <person name="Schneider C."/>
            <person name="Schoenbach C."/>
            <person name="Sekiguchi K."/>
            <person name="Semple C.A."/>
            <person name="Seno S."/>
            <person name="Sessa L."/>
            <person name="Sheng Y."/>
            <person name="Shibata Y."/>
            <person name="Shimada H."/>
            <person name="Shimada K."/>
            <person name="Silva D."/>
            <person name="Sinclair B."/>
            <person name="Sperling S."/>
            <person name="Stupka E."/>
            <person name="Sugiura K."/>
            <person name="Sultana R."/>
            <person name="Takenaka Y."/>
            <person name="Taki K."/>
            <person name="Tammoja K."/>
            <person name="Tan S.L."/>
            <person name="Tang S."/>
            <person name="Taylor M.S."/>
            <person name="Tegner J."/>
            <person name="Teichmann S.A."/>
            <person name="Ueda H.R."/>
            <person name="van Nimwegen E."/>
            <person name="Verardo R."/>
            <person name="Wei C.L."/>
            <person name="Yagi K."/>
            <person name="Yamanishi H."/>
            <person name="Zabarovsky E."/>
            <person name="Zhu S."/>
            <person name="Zimmer A."/>
            <person name="Hide W."/>
            <person name="Bult C."/>
            <person name="Grimmond S.M."/>
            <person name="Teasdale R.D."/>
            <person name="Liu E.T."/>
            <person name="Brusic V."/>
            <person name="Quackenbush J."/>
            <person name="Wahlestedt C."/>
            <person name="Mattick J.S."/>
            <person name="Hume D.A."/>
            <person name="Kai C."/>
            <person name="Sasaki D."/>
            <person name="Tomaru Y."/>
            <person name="Fukuda S."/>
            <person name="Kanamori-Katayama M."/>
            <person name="Suzuki M."/>
            <person name="Aoki J."/>
            <person name="Arakawa T."/>
            <person name="Iida J."/>
            <person name="Imamura K."/>
            <person name="Itoh M."/>
            <person name="Kato T."/>
            <person name="Kawaji H."/>
            <person name="Kawagashira N."/>
            <person name="Kawashima T."/>
            <person name="Kojima M."/>
            <person name="Kondo S."/>
            <person name="Konno H."/>
            <person name="Nakano K."/>
            <person name="Ninomiya N."/>
            <person name="Nishio T."/>
            <person name="Okada M."/>
            <person name="Plessy C."/>
            <person name="Shibata K."/>
            <person name="Shiraki T."/>
            <person name="Suzuki S."/>
            <person name="Tagami M."/>
            <person name="Waki K."/>
            <person name="Watahiki A."/>
            <person name="Okamura-Oho Y."/>
            <person name="Suzuki H."/>
            <person name="Kawai J."/>
            <person name="Hayashizaki Y."/>
        </authorList>
    </citation>
    <scope>NUCLEOTIDE SEQUENCE [LARGE SCALE MRNA] (ISOFORM 2)</scope>
    <source>
        <strain>NOD</strain>
        <tissue>Spleen</tissue>
    </source>
</reference>
<reference key="3">
    <citation type="journal article" date="2009" name="PLoS Biol.">
        <title>Lineage-specific biology revealed by a finished genome assembly of the mouse.</title>
        <authorList>
            <person name="Church D.M."/>
            <person name="Goodstadt L."/>
            <person name="Hillier L.W."/>
            <person name="Zody M.C."/>
            <person name="Goldstein S."/>
            <person name="She X."/>
            <person name="Bult C.J."/>
            <person name="Agarwala R."/>
            <person name="Cherry J.L."/>
            <person name="DiCuccio M."/>
            <person name="Hlavina W."/>
            <person name="Kapustin Y."/>
            <person name="Meric P."/>
            <person name="Maglott D."/>
            <person name="Birtle Z."/>
            <person name="Marques A.C."/>
            <person name="Graves T."/>
            <person name="Zhou S."/>
            <person name="Teague B."/>
            <person name="Potamousis K."/>
            <person name="Churas C."/>
            <person name="Place M."/>
            <person name="Herschleb J."/>
            <person name="Runnheim R."/>
            <person name="Forrest D."/>
            <person name="Amos-Landgraf J."/>
            <person name="Schwartz D.C."/>
            <person name="Cheng Z."/>
            <person name="Lindblad-Toh K."/>
            <person name="Eichler E.E."/>
            <person name="Ponting C.P."/>
        </authorList>
    </citation>
    <scope>NUCLEOTIDE SEQUENCE [LARGE SCALE GENOMIC DNA]</scope>
    <source>
        <strain>C57BL/6J</strain>
    </source>
</reference>
<reference key="4">
    <citation type="journal article" date="2014" name="Nat. Genet.">
        <title>Antagonistic roles of ubiquitin ligase HEI10 and SUMO ligase RNF212 regulate meiotic recombination.</title>
        <authorList>
            <person name="Qiao H."/>
            <person name="Prasada Rao H.B."/>
            <person name="Yang Y."/>
            <person name="Fong J.H."/>
            <person name="Cloutier J.M."/>
            <person name="Deacon D.C."/>
            <person name="Nagel K.E."/>
            <person name="Swartz R.K."/>
            <person name="Strong E."/>
            <person name="Holloway J.K."/>
            <person name="Cohen P.E."/>
            <person name="Schimenti J."/>
            <person name="Ward J."/>
            <person name="Hunter N."/>
        </authorList>
    </citation>
    <scope>FUNCTION</scope>
    <scope>SUBCELLULAR LOCATION</scope>
    <scope>DEVELOPMENTAL STAGE</scope>
</reference>